<accession>Q5R5C3</accession>
<sequence length="230" mass="25152">MRLAGPLRIVALVVSVGLTWIVVSILLGGPGSGFPRIQQLFTSPESSVTAAPRARKYKCGLPQPCPEEHLAFRVVSGAANVIGPKICLEDKMLMSSVKDNVGRGLNIALVNGVSGELIEARAFDMWAGDVNDLLKFIRPLHEGTLVFVASYDDPATKMNEETRKLFSELGSRNAKELAFRDSWVFVGAKGVQNKSPFEQHVKNSKHTNKYEGWPEALEMEGCIPRRSTAS</sequence>
<feature type="signal peptide" evidence="2">
    <location>
        <begin position="1"/>
        <end position="33"/>
    </location>
</feature>
<feature type="chain" id="PRO_0000042931" description="Protein FAM3A">
    <location>
        <begin position="34"/>
        <end position="230"/>
    </location>
</feature>
<feature type="domain" description="GG-type lectin" evidence="3">
    <location>
        <begin position="68"/>
        <end position="226"/>
    </location>
</feature>
<feature type="disulfide bond" evidence="1">
    <location>
        <begin position="59"/>
        <end position="87"/>
    </location>
</feature>
<feature type="disulfide bond" evidence="1">
    <location>
        <begin position="65"/>
        <end position="222"/>
    </location>
</feature>
<organism>
    <name type="scientific">Pongo abelii</name>
    <name type="common">Sumatran orangutan</name>
    <name type="synonym">Pongo pygmaeus abelii</name>
    <dbReference type="NCBI Taxonomy" id="9601"/>
    <lineage>
        <taxon>Eukaryota</taxon>
        <taxon>Metazoa</taxon>
        <taxon>Chordata</taxon>
        <taxon>Craniata</taxon>
        <taxon>Vertebrata</taxon>
        <taxon>Euteleostomi</taxon>
        <taxon>Mammalia</taxon>
        <taxon>Eutheria</taxon>
        <taxon>Euarchontoglires</taxon>
        <taxon>Primates</taxon>
        <taxon>Haplorrhini</taxon>
        <taxon>Catarrhini</taxon>
        <taxon>Hominidae</taxon>
        <taxon>Pongo</taxon>
    </lineage>
</organism>
<keyword id="KW-1015">Disulfide bond</keyword>
<keyword id="KW-0430">Lectin</keyword>
<keyword id="KW-1185">Reference proteome</keyword>
<keyword id="KW-0964">Secreted</keyword>
<keyword id="KW-0732">Signal</keyword>
<evidence type="ECO:0000250" key="1"/>
<evidence type="ECO:0000255" key="2"/>
<evidence type="ECO:0000255" key="3">
    <source>
        <dbReference type="PROSITE-ProRule" id="PRU01375"/>
    </source>
</evidence>
<evidence type="ECO:0000305" key="4"/>
<dbReference type="EMBL" id="CR860939">
    <property type="protein sequence ID" value="CAH93043.1"/>
    <property type="molecule type" value="mRNA"/>
</dbReference>
<dbReference type="RefSeq" id="NP_001126799.1">
    <property type="nucleotide sequence ID" value="NM_001133327.1"/>
</dbReference>
<dbReference type="SMR" id="Q5R5C3"/>
<dbReference type="FunCoup" id="Q5R5C3">
    <property type="interactions" value="16"/>
</dbReference>
<dbReference type="GeneID" id="100173803"/>
<dbReference type="KEGG" id="pon:100173803"/>
<dbReference type="CTD" id="60343"/>
<dbReference type="eggNOG" id="ENOG502QUEU">
    <property type="taxonomic scope" value="Eukaryota"/>
</dbReference>
<dbReference type="InParanoid" id="Q5R5C3"/>
<dbReference type="OrthoDB" id="440755at2759"/>
<dbReference type="Proteomes" id="UP000001595">
    <property type="component" value="Unplaced"/>
</dbReference>
<dbReference type="GO" id="GO:0005576">
    <property type="term" value="C:extracellular region"/>
    <property type="evidence" value="ECO:0007669"/>
    <property type="project" value="UniProtKB-SubCell"/>
</dbReference>
<dbReference type="GO" id="GO:0030246">
    <property type="term" value="F:carbohydrate binding"/>
    <property type="evidence" value="ECO:0007669"/>
    <property type="project" value="UniProtKB-KW"/>
</dbReference>
<dbReference type="CDD" id="cd13940">
    <property type="entry name" value="ILEI_FAM3C"/>
    <property type="match status" value="1"/>
</dbReference>
<dbReference type="InterPro" id="IPR039220">
    <property type="entry name" value="FAM3"/>
</dbReference>
<dbReference type="InterPro" id="IPR039477">
    <property type="entry name" value="ILEI/PANDER_dom"/>
</dbReference>
<dbReference type="InterPro" id="IPR039475">
    <property type="entry name" value="ILEI_FAM3C"/>
</dbReference>
<dbReference type="PANTHER" id="PTHR14592">
    <property type="entry name" value="UNCHARACTERIZED FAM3"/>
    <property type="match status" value="1"/>
</dbReference>
<dbReference type="Pfam" id="PF15711">
    <property type="entry name" value="ILEI"/>
    <property type="match status" value="1"/>
</dbReference>
<dbReference type="PROSITE" id="PS52031">
    <property type="entry name" value="GG_LECTIN"/>
    <property type="match status" value="1"/>
</dbReference>
<comment type="subcellular location">
    <subcellularLocation>
        <location evidence="4">Secreted</location>
    </subcellularLocation>
</comment>
<comment type="similarity">
    <text evidence="4">Belongs to the FAM3 family.</text>
</comment>
<reference key="1">
    <citation type="submission" date="2004-11" db="EMBL/GenBank/DDBJ databases">
        <authorList>
            <consortium name="The German cDNA consortium"/>
        </authorList>
    </citation>
    <scope>NUCLEOTIDE SEQUENCE [LARGE SCALE MRNA]</scope>
    <source>
        <tissue>Kidney</tissue>
    </source>
</reference>
<gene>
    <name type="primary">FAM3A</name>
</gene>
<proteinExistence type="evidence at transcript level"/>
<protein>
    <recommendedName>
        <fullName>Protein FAM3A</fullName>
    </recommendedName>
</protein>
<name>FAM3A_PONAB</name>